<protein>
    <recommendedName>
        <fullName>Lectin-like protein BA14k</fullName>
    </recommendedName>
</protein>
<gene>
    <name type="ordered locus">BSUIS_B0727</name>
</gene>
<sequence length="147" mass="16823">MNSFRKTCAGALALIFGATSIVPTVAAPMNMDRPAINQNVIQARAHYRPQNYNRGHRPGYWHGHRGYRHYRHGYRRHNDGWWYPLAAFGAGAIIGGAISQPRPVYRAPAGSPHVQWCYSRYKSYRASDNTFQPYNGPRKQCRSPYSR</sequence>
<comment type="function">
    <text evidence="1">Has immunoglobulin-binding and hemagglutination properties, and can bind to mannose. Essential for virulence. May be involved in LPS biosynthesis or polysaccharide transport (By similarity).</text>
</comment>
<comment type="subcellular location">
    <subcellularLocation>
        <location evidence="3">Cell membrane</location>
        <topology evidence="3">Single-pass membrane protein</topology>
    </subcellularLocation>
</comment>
<comment type="similarity">
    <text evidence="3">Belongs to the BA14k family.</text>
</comment>
<proteinExistence type="inferred from homology"/>
<reference key="1">
    <citation type="submission" date="2007-12" db="EMBL/GenBank/DDBJ databases">
        <title>Brucella suis ATCC 23445 whole genome shotgun sequencing project.</title>
        <authorList>
            <person name="Setubal J.C."/>
            <person name="Bowns C."/>
            <person name="Boyle S."/>
            <person name="Crasta O.R."/>
            <person name="Czar M.J."/>
            <person name="Dharmanolla C."/>
            <person name="Gillespie J.J."/>
            <person name="Kenyon R.W."/>
            <person name="Lu J."/>
            <person name="Mane S."/>
            <person name="Mohapatra S."/>
            <person name="Nagrani S."/>
            <person name="Purkayastha A."/>
            <person name="Rajasimha H.K."/>
            <person name="Shallom J.M."/>
            <person name="Shallom S."/>
            <person name="Shukla M."/>
            <person name="Snyder E.E."/>
            <person name="Sobral B.W."/>
            <person name="Wattam A.R."/>
            <person name="Will R."/>
            <person name="Williams K."/>
            <person name="Yoo H."/>
            <person name="Bruce D."/>
            <person name="Detter C."/>
            <person name="Munk C."/>
            <person name="Brettin T.S."/>
        </authorList>
    </citation>
    <scope>NUCLEOTIDE SEQUENCE [LARGE SCALE GENOMIC DNA]</scope>
    <source>
        <strain>ATCC 23445 / NCTC 10510</strain>
    </source>
</reference>
<accession>A9WZ33</accession>
<evidence type="ECO:0000250" key="1"/>
<evidence type="ECO:0000255" key="2"/>
<evidence type="ECO:0000305" key="3"/>
<keyword id="KW-1003">Cell membrane</keyword>
<keyword id="KW-0430">Lectin</keyword>
<keyword id="KW-0472">Membrane</keyword>
<keyword id="KW-0732">Signal</keyword>
<keyword id="KW-0812">Transmembrane</keyword>
<keyword id="KW-1133">Transmembrane helix</keyword>
<keyword id="KW-0843">Virulence</keyword>
<dbReference type="EMBL" id="CP000912">
    <property type="protein sequence ID" value="ABY39699.1"/>
    <property type="molecule type" value="Genomic_DNA"/>
</dbReference>
<dbReference type="RefSeq" id="WP_002965908.1">
    <property type="nucleotide sequence ID" value="NC_010167.1"/>
</dbReference>
<dbReference type="KEGG" id="bmt:BSUIS_B0727"/>
<dbReference type="HOGENOM" id="CLU_095992_0_0_5"/>
<dbReference type="Proteomes" id="UP000008545">
    <property type="component" value="Chromosome II"/>
</dbReference>
<dbReference type="GO" id="GO:0005886">
    <property type="term" value="C:plasma membrane"/>
    <property type="evidence" value="ECO:0007669"/>
    <property type="project" value="UniProtKB-SubCell"/>
</dbReference>
<dbReference type="GO" id="GO:0030246">
    <property type="term" value="F:carbohydrate binding"/>
    <property type="evidence" value="ECO:0007669"/>
    <property type="project" value="UniProtKB-KW"/>
</dbReference>
<dbReference type="InterPro" id="IPR012413">
    <property type="entry name" value="BA14K"/>
</dbReference>
<dbReference type="Pfam" id="PF07886">
    <property type="entry name" value="BA14K"/>
    <property type="match status" value="1"/>
</dbReference>
<name>14KL_BRUSI</name>
<feature type="signal peptide" evidence="2">
    <location>
        <begin position="1"/>
        <end position="26"/>
    </location>
</feature>
<feature type="chain" id="PRO_0000361301" description="Lectin-like protein BA14k">
    <location>
        <begin position="27"/>
        <end position="147"/>
    </location>
</feature>
<feature type="transmembrane region" description="Helical" evidence="2">
    <location>
        <begin position="80"/>
        <end position="100"/>
    </location>
</feature>
<organism>
    <name type="scientific">Brucella suis (strain ATCC 23445 / NCTC 10510)</name>
    <dbReference type="NCBI Taxonomy" id="470137"/>
    <lineage>
        <taxon>Bacteria</taxon>
        <taxon>Pseudomonadati</taxon>
        <taxon>Pseudomonadota</taxon>
        <taxon>Alphaproteobacteria</taxon>
        <taxon>Hyphomicrobiales</taxon>
        <taxon>Brucellaceae</taxon>
        <taxon>Brucella/Ochrobactrum group</taxon>
        <taxon>Brucella</taxon>
    </lineage>
</organism>